<organism>
    <name type="scientific">Helicobacter pylori (strain J99 / ATCC 700824)</name>
    <name type="common">Campylobacter pylori J99</name>
    <dbReference type="NCBI Taxonomy" id="85963"/>
    <lineage>
        <taxon>Bacteria</taxon>
        <taxon>Pseudomonadati</taxon>
        <taxon>Campylobacterota</taxon>
        <taxon>Epsilonproteobacteria</taxon>
        <taxon>Campylobacterales</taxon>
        <taxon>Helicobacteraceae</taxon>
        <taxon>Helicobacter</taxon>
    </lineage>
</organism>
<accession>Q9ZJ31</accession>
<dbReference type="EC" id="3.1.-.-" evidence="5"/>
<dbReference type="EMBL" id="AE001439">
    <property type="protein sequence ID" value="AAD07061.1"/>
    <property type="molecule type" value="Genomic_DNA"/>
</dbReference>
<dbReference type="PIR" id="A71801">
    <property type="entry name" value="A71801"/>
</dbReference>
<dbReference type="RefSeq" id="WP_000734125.1">
    <property type="nucleotide sequence ID" value="NC_000921.1"/>
</dbReference>
<dbReference type="SMR" id="Q9ZJ31"/>
<dbReference type="KEGG" id="hpj:jhp_1487"/>
<dbReference type="PATRIC" id="fig|85963.30.peg.1054"/>
<dbReference type="eggNOG" id="COG0671">
    <property type="taxonomic scope" value="Bacteria"/>
</dbReference>
<dbReference type="UniPathway" id="UPA00973"/>
<dbReference type="Proteomes" id="UP000000804">
    <property type="component" value="Chromosome"/>
</dbReference>
<dbReference type="GO" id="GO:0005886">
    <property type="term" value="C:plasma membrane"/>
    <property type="evidence" value="ECO:0007669"/>
    <property type="project" value="UniProtKB-SubCell"/>
</dbReference>
<dbReference type="GO" id="GO:0016791">
    <property type="term" value="F:phosphatase activity"/>
    <property type="evidence" value="ECO:0000315"/>
    <property type="project" value="UniProtKB"/>
</dbReference>
<dbReference type="GO" id="GO:0009245">
    <property type="term" value="P:lipid A biosynthetic process"/>
    <property type="evidence" value="ECO:0000315"/>
    <property type="project" value="UniProtKB"/>
</dbReference>
<dbReference type="GO" id="GO:0009103">
    <property type="term" value="P:lipopolysaccharide biosynthetic process"/>
    <property type="evidence" value="ECO:0007669"/>
    <property type="project" value="UniProtKB-KW"/>
</dbReference>
<dbReference type="GO" id="GO:0046677">
    <property type="term" value="P:response to antibiotic"/>
    <property type="evidence" value="ECO:0007669"/>
    <property type="project" value="UniProtKB-KW"/>
</dbReference>
<dbReference type="GO" id="GO:0141043">
    <property type="term" value="P:symbiont-mediated evasion of host innate immune response"/>
    <property type="evidence" value="ECO:0000315"/>
    <property type="project" value="UniProtKB"/>
</dbReference>
<dbReference type="CDD" id="cd03394">
    <property type="entry name" value="PAP2_like_5"/>
    <property type="match status" value="1"/>
</dbReference>
<dbReference type="Gene3D" id="1.20.144.10">
    <property type="entry name" value="Phosphatidic acid phosphatase type 2/haloperoxidase"/>
    <property type="match status" value="1"/>
</dbReference>
<dbReference type="InterPro" id="IPR036938">
    <property type="entry name" value="P_Acid_Pase_2/haloperoxi_sf"/>
</dbReference>
<dbReference type="InterPro" id="IPR000326">
    <property type="entry name" value="P_Acid_Pase_2/haloperoxidase"/>
</dbReference>
<dbReference type="Pfam" id="PF01569">
    <property type="entry name" value="PAP2"/>
    <property type="match status" value="1"/>
</dbReference>
<dbReference type="SUPFAM" id="SSF48317">
    <property type="entry name" value="Acid phosphatase/Vanadium-dependent haloperoxidase"/>
    <property type="match status" value="1"/>
</dbReference>
<reference key="1">
    <citation type="journal article" date="1999" name="Nature">
        <title>Genomic sequence comparison of two unrelated isolates of the human gastric pathogen Helicobacter pylori.</title>
        <authorList>
            <person name="Alm R.A."/>
            <person name="Ling L.-S.L."/>
            <person name="Moir D.T."/>
            <person name="King B.L."/>
            <person name="Brown E.D."/>
            <person name="Doig P.C."/>
            <person name="Smith D.R."/>
            <person name="Noonan B."/>
            <person name="Guild B.C."/>
            <person name="deJonge B.L."/>
            <person name="Carmel G."/>
            <person name="Tummino P.J."/>
            <person name="Caruso A."/>
            <person name="Uria-Nickelsen M."/>
            <person name="Mills D.M."/>
            <person name="Ives C."/>
            <person name="Gibson R."/>
            <person name="Merberg D."/>
            <person name="Mills S.D."/>
            <person name="Jiang Q."/>
            <person name="Taylor D.E."/>
            <person name="Vovis G.F."/>
            <person name="Trust T.J."/>
        </authorList>
    </citation>
    <scope>NUCLEOTIDE SEQUENCE [LARGE SCALE GENOMIC DNA]</scope>
    <source>
        <strain>J99 / ATCC 700824</strain>
    </source>
</reference>
<reference key="2">
    <citation type="journal article" date="2011" name="PLoS Pathog.">
        <title>Helicobacter pylori versus the host: remodeling of the bacterial outer membrane is required for survival in the gastric mucosa.</title>
        <authorList>
            <person name="Cullen T.W."/>
            <person name="Giles D.K."/>
            <person name="Wolf L.N."/>
            <person name="Ecobichon C."/>
            <person name="Boneca I.G."/>
            <person name="Trent M.S."/>
        </authorList>
    </citation>
    <scope>FUNCTION</scope>
    <scope>PATHWAY</scope>
    <scope>DISRUPTION PHENOTYPE</scope>
    <scope>STRUCTURE OF LIPID A</scope>
    <scope>ANTIBIOTIC RESISTANCE</scope>
    <source>
        <strain>B128</strain>
        <strain>J99 / ATCC 700824</strain>
        <strain>X47</strain>
    </source>
</reference>
<keyword id="KW-0046">Antibiotic resistance</keyword>
<keyword id="KW-0997">Cell inner membrane</keyword>
<keyword id="KW-1003">Cell membrane</keyword>
<keyword id="KW-0378">Hydrolase</keyword>
<keyword id="KW-0441">Lipid A biosynthesis</keyword>
<keyword id="KW-0444">Lipid biosynthesis</keyword>
<keyword id="KW-0443">Lipid metabolism</keyword>
<keyword id="KW-0448">Lipopolysaccharide biosynthesis</keyword>
<keyword id="KW-0472">Membrane</keyword>
<keyword id="KW-0812">Transmembrane</keyword>
<keyword id="KW-1133">Transmembrane helix</keyword>
<keyword id="KW-0843">Virulence</keyword>
<name>LPXF_HELPJ</name>
<protein>
    <recommendedName>
        <fullName evidence="4">Lipid A 4'-phosphatase</fullName>
        <ecNumber evidence="5">3.1.-.-</ecNumber>
    </recommendedName>
</protein>
<comment type="function">
    <text evidence="3">Removes the 4'-phosphate group from tetra- and hexaacylated lipid A species, has no 1-phosphatase or Kdo hydrolase activity. Absence of the 4'-phosphate group renders the bacteria resistant to host-derived cationic antimicrobial peptides (CAMP), allowing it to camouflage itself from the host innate immune response, and plays a critical role in the long-term colonization of the host's stomach.</text>
</comment>
<comment type="pathway">
    <text evidence="3 5">Bacterial outer membrane biogenesis; LPS lipid A biosynthesis.</text>
</comment>
<comment type="subcellular location">
    <subcellularLocation>
        <location evidence="1">Cell inner membrane</location>
        <topology evidence="2">Single-pass membrane protein</topology>
    </subcellularLocation>
</comment>
<comment type="disruption phenotype">
    <text evidence="3">Loss of Kdo(2)-lipid A 4'-phosphatase activity, accumulation of 4'-phosphate hexaacylated lipid A. 360-fold decrease in resistance to cationic antimicrobial peptide (CAMP) polymyxin B (PMB), increased cell-surface binding of CAMP, 20-fold decrease in resistance to endogenous antibacterial peptide Hp (rplA). Lipopolysaccharide (LPS) from the deleted strain induces the human innate immune response via Toll-like receptor 4 (TLR4) 6-fold in cultured cells (similar effects are seen with mouse cells, has no effect on TLR2-mediated induction). Almost complete loss of colonization of C57BL/6J mouse stomach (using mouse-adapted H.pylori strains B128 and X47). No changes in O-antigen or cell motility. A double lpxE-lpxF mutant accumulates 1-, 4'-bisphosphate hexaacylated lipid A, has 1000-fold decrease in resistance to PMB (a similar reduction in resistance is seen for other human-derived CAMPs), a 70-fold decrease in resistance to endogenous antibacterial peptide Hp, induces the innate immune response via TLR4 10-fold, complete loss of colonization of C57BL/6J mouse stomachs (strains B128 and X47).</text>
</comment>
<comment type="miscellaneous">
    <text evidence="3">In this organism most lipid A is tetraacylated without a phosphate group at the 4'-position and a phosphoethanolamine residue at the 1-position.</text>
</comment>
<comment type="similarity">
    <text evidence="5">Belongs to the lipid A LpxF 4'-phosphatase family.</text>
</comment>
<gene>
    <name evidence="4" type="primary">lpxF</name>
    <name type="ordered locus">jhp_1487</name>
</gene>
<evidence type="ECO:0000250" key="1">
    <source>
        <dbReference type="UniProtKB" id="A0Q4N6"/>
    </source>
</evidence>
<evidence type="ECO:0000255" key="2"/>
<evidence type="ECO:0000269" key="3">
    <source>
    </source>
</evidence>
<evidence type="ECO:0000303" key="4">
    <source>
    </source>
</evidence>
<evidence type="ECO:0000305" key="5"/>
<sequence>MKKLKGLFLSLLLWVYPLKSEPINEGAYILEEIGDVLRFLPIFVGTVSLAMRDYRGLGELAVGTLVTQGVIYGLKGAFSTAHKDGARVGFAKRPCCNSWRGMPSGHAGGAFSAAGFVYYRYGWKPALPVIALAILTDTSRVVAGQHTILQVTIGSLIAWGFAYLFTSRYKPKRWMLYPEISSDFKGSSRYGVGFSYQW</sequence>
<feature type="chain" id="PRO_0000432496" description="Lipid A 4'-phosphatase">
    <location>
        <begin position="1"/>
        <end position="198"/>
    </location>
</feature>
<feature type="transmembrane region" description="Helical" evidence="2">
    <location>
        <begin position="143"/>
        <end position="165"/>
    </location>
</feature>
<proteinExistence type="inferred from homology"/>